<reference key="1">
    <citation type="journal article" date="2007" name="PLoS Genet.">
        <title>A tale of two oxidation states: bacterial colonization of arsenic-rich environments.</title>
        <authorList>
            <person name="Muller D."/>
            <person name="Medigue C."/>
            <person name="Koechler S."/>
            <person name="Barbe V."/>
            <person name="Barakat M."/>
            <person name="Talla E."/>
            <person name="Bonnefoy V."/>
            <person name="Krin E."/>
            <person name="Arsene-Ploetze F."/>
            <person name="Carapito C."/>
            <person name="Chandler M."/>
            <person name="Cournoyer B."/>
            <person name="Cruveiller S."/>
            <person name="Dossat C."/>
            <person name="Duval S."/>
            <person name="Heymann M."/>
            <person name="Leize E."/>
            <person name="Lieutaud A."/>
            <person name="Lievremont D."/>
            <person name="Makita Y."/>
            <person name="Mangenot S."/>
            <person name="Nitschke W."/>
            <person name="Ortet P."/>
            <person name="Perdrial N."/>
            <person name="Schoepp B."/>
            <person name="Siguier P."/>
            <person name="Simeonova D.D."/>
            <person name="Rouy Z."/>
            <person name="Segurens B."/>
            <person name="Turlin E."/>
            <person name="Vallenet D."/>
            <person name="van Dorsselaer A."/>
            <person name="Weiss S."/>
            <person name="Weissenbach J."/>
            <person name="Lett M.-C."/>
            <person name="Danchin A."/>
            <person name="Bertin P.N."/>
        </authorList>
    </citation>
    <scope>NUCLEOTIDE SEQUENCE [LARGE SCALE GENOMIC DNA]</scope>
    <source>
        <strain>ULPAs1</strain>
    </source>
</reference>
<accession>A4G709</accession>
<proteinExistence type="inferred from homology"/>
<keyword id="KW-1185">Reference proteome</keyword>
<keyword id="KW-0687">Ribonucleoprotein</keyword>
<keyword id="KW-0689">Ribosomal protein</keyword>
<keyword id="KW-0694">RNA-binding</keyword>
<keyword id="KW-0699">rRNA-binding</keyword>
<sequence length="150" mass="15999">MQVILLEKVVNLGNLGEIVKVKDGYARNFLIPQRKARRATTAAVAEFEVKRAELEKIAAEKLAASQAQGEKLTGQTVQISQKSGVDGRLFGSVTNADIAVALTKQGFAVEKAQVRMPTGPLKVTGDHTVAVALHTDVVIEVTITIVGEHA</sequence>
<dbReference type="EMBL" id="CU207211">
    <property type="protein sequence ID" value="CAL62296.1"/>
    <property type="molecule type" value="Genomic_DNA"/>
</dbReference>
<dbReference type="SMR" id="A4G709"/>
<dbReference type="STRING" id="204773.HEAR2159"/>
<dbReference type="KEGG" id="har:HEAR2159"/>
<dbReference type="eggNOG" id="COG0359">
    <property type="taxonomic scope" value="Bacteria"/>
</dbReference>
<dbReference type="HOGENOM" id="CLU_078938_4_1_4"/>
<dbReference type="OrthoDB" id="9788336at2"/>
<dbReference type="Proteomes" id="UP000006697">
    <property type="component" value="Chromosome"/>
</dbReference>
<dbReference type="GO" id="GO:1990904">
    <property type="term" value="C:ribonucleoprotein complex"/>
    <property type="evidence" value="ECO:0007669"/>
    <property type="project" value="UniProtKB-KW"/>
</dbReference>
<dbReference type="GO" id="GO:0005840">
    <property type="term" value="C:ribosome"/>
    <property type="evidence" value="ECO:0007669"/>
    <property type="project" value="UniProtKB-KW"/>
</dbReference>
<dbReference type="GO" id="GO:0019843">
    <property type="term" value="F:rRNA binding"/>
    <property type="evidence" value="ECO:0007669"/>
    <property type="project" value="UniProtKB-UniRule"/>
</dbReference>
<dbReference type="GO" id="GO:0003735">
    <property type="term" value="F:structural constituent of ribosome"/>
    <property type="evidence" value="ECO:0007669"/>
    <property type="project" value="InterPro"/>
</dbReference>
<dbReference type="GO" id="GO:0006412">
    <property type="term" value="P:translation"/>
    <property type="evidence" value="ECO:0007669"/>
    <property type="project" value="UniProtKB-UniRule"/>
</dbReference>
<dbReference type="Gene3D" id="3.10.430.100">
    <property type="entry name" value="Ribosomal protein L9, C-terminal domain"/>
    <property type="match status" value="1"/>
</dbReference>
<dbReference type="Gene3D" id="3.40.5.10">
    <property type="entry name" value="Ribosomal protein L9, N-terminal domain"/>
    <property type="match status" value="1"/>
</dbReference>
<dbReference type="HAMAP" id="MF_00503">
    <property type="entry name" value="Ribosomal_bL9"/>
    <property type="match status" value="1"/>
</dbReference>
<dbReference type="InterPro" id="IPR000244">
    <property type="entry name" value="Ribosomal_bL9"/>
</dbReference>
<dbReference type="InterPro" id="IPR009027">
    <property type="entry name" value="Ribosomal_bL9/RNase_H1_N"/>
</dbReference>
<dbReference type="InterPro" id="IPR020594">
    <property type="entry name" value="Ribosomal_bL9_bac/chp"/>
</dbReference>
<dbReference type="InterPro" id="IPR020069">
    <property type="entry name" value="Ribosomal_bL9_C"/>
</dbReference>
<dbReference type="InterPro" id="IPR036791">
    <property type="entry name" value="Ribosomal_bL9_C_sf"/>
</dbReference>
<dbReference type="InterPro" id="IPR020070">
    <property type="entry name" value="Ribosomal_bL9_N"/>
</dbReference>
<dbReference type="InterPro" id="IPR036935">
    <property type="entry name" value="Ribosomal_bL9_N_sf"/>
</dbReference>
<dbReference type="NCBIfam" id="TIGR00158">
    <property type="entry name" value="L9"/>
    <property type="match status" value="1"/>
</dbReference>
<dbReference type="PANTHER" id="PTHR21368">
    <property type="entry name" value="50S RIBOSOMAL PROTEIN L9"/>
    <property type="match status" value="1"/>
</dbReference>
<dbReference type="Pfam" id="PF03948">
    <property type="entry name" value="Ribosomal_L9_C"/>
    <property type="match status" value="1"/>
</dbReference>
<dbReference type="Pfam" id="PF01281">
    <property type="entry name" value="Ribosomal_L9_N"/>
    <property type="match status" value="1"/>
</dbReference>
<dbReference type="SUPFAM" id="SSF55658">
    <property type="entry name" value="L9 N-domain-like"/>
    <property type="match status" value="1"/>
</dbReference>
<dbReference type="SUPFAM" id="SSF55653">
    <property type="entry name" value="Ribosomal protein L9 C-domain"/>
    <property type="match status" value="1"/>
</dbReference>
<dbReference type="PROSITE" id="PS00651">
    <property type="entry name" value="RIBOSOMAL_L9"/>
    <property type="match status" value="1"/>
</dbReference>
<comment type="function">
    <text evidence="1">Binds to the 23S rRNA.</text>
</comment>
<comment type="similarity">
    <text evidence="1">Belongs to the bacterial ribosomal protein bL9 family.</text>
</comment>
<evidence type="ECO:0000255" key="1">
    <source>
        <dbReference type="HAMAP-Rule" id="MF_00503"/>
    </source>
</evidence>
<evidence type="ECO:0000305" key="2"/>
<gene>
    <name evidence="1" type="primary">rplI</name>
    <name type="ordered locus">HEAR2159</name>
</gene>
<organism>
    <name type="scientific">Herminiimonas arsenicoxydans</name>
    <dbReference type="NCBI Taxonomy" id="204773"/>
    <lineage>
        <taxon>Bacteria</taxon>
        <taxon>Pseudomonadati</taxon>
        <taxon>Pseudomonadota</taxon>
        <taxon>Betaproteobacteria</taxon>
        <taxon>Burkholderiales</taxon>
        <taxon>Oxalobacteraceae</taxon>
        <taxon>Herminiimonas</taxon>
    </lineage>
</organism>
<protein>
    <recommendedName>
        <fullName evidence="1">Large ribosomal subunit protein bL9</fullName>
    </recommendedName>
    <alternativeName>
        <fullName evidence="2">50S ribosomal protein L9</fullName>
    </alternativeName>
</protein>
<feature type="chain" id="PRO_1000014791" description="Large ribosomal subunit protein bL9">
    <location>
        <begin position="1"/>
        <end position="150"/>
    </location>
</feature>
<name>RL9_HERAR</name>